<protein>
    <recommendedName>
        <fullName>Thylakoid ADP,ATP carrier protein, chloroplastic</fullName>
    </recommendedName>
    <alternativeName>
        <fullName>Thylakoid ADP/ATP translocase</fullName>
    </alternativeName>
</protein>
<feature type="transit peptide" description="Chloroplast" evidence="3">
    <location>
        <begin position="1"/>
        <end position="61"/>
    </location>
</feature>
<feature type="chain" id="PRO_0000313084" description="Thylakoid ADP,ATP carrier protein, chloroplastic">
    <location>
        <begin position="62"/>
        <end position="415"/>
    </location>
</feature>
<feature type="transmembrane region" description="Helical; Name=1" evidence="1">
    <location>
        <begin position="106"/>
        <end position="126"/>
    </location>
</feature>
<feature type="transmembrane region" description="Helical; Name=2" evidence="1">
    <location>
        <begin position="182"/>
        <end position="207"/>
    </location>
</feature>
<feature type="transmembrane region" description="Helical; Name=3" evidence="1">
    <location>
        <begin position="219"/>
        <end position="239"/>
    </location>
</feature>
<feature type="transmembrane region" description="Helical; Name=4" evidence="1">
    <location>
        <begin position="273"/>
        <end position="293"/>
    </location>
</feature>
<feature type="transmembrane region" description="Helical; Name=5" evidence="3">
    <location>
        <begin position="309"/>
        <end position="329"/>
    </location>
</feature>
<feature type="transmembrane region" description="Helical; Name=6" evidence="1">
    <location>
        <begin position="362"/>
        <end position="388"/>
    </location>
</feature>
<feature type="repeat" description="Solcar 1">
    <location>
        <begin position="113"/>
        <end position="205"/>
    </location>
</feature>
<feature type="repeat" description="Solcar 2">
    <location>
        <begin position="213"/>
        <end position="296"/>
    </location>
</feature>
<feature type="repeat" description="Solcar 3">
    <location>
        <begin position="307"/>
        <end position="387"/>
    </location>
</feature>
<feature type="binding site" evidence="2">
    <location>
        <position position="187"/>
    </location>
    <ligand>
        <name>ADP</name>
        <dbReference type="ChEBI" id="CHEBI:456216"/>
    </ligand>
</feature>
<feature type="binding site" evidence="2">
    <location>
        <position position="330"/>
    </location>
    <ligand>
        <name>ADP</name>
        <dbReference type="ChEBI" id="CHEBI:456216"/>
    </ligand>
</feature>
<feature type="sequence conflict" description="In Ref. 4; AAM64475." evidence="5" ref="4">
    <original>I</original>
    <variation>T</variation>
    <location>
        <position position="411"/>
    </location>
</feature>
<evidence type="ECO:0000250" key="1"/>
<evidence type="ECO:0000250" key="2">
    <source>
        <dbReference type="UniProtKB" id="P02722"/>
    </source>
</evidence>
<evidence type="ECO:0000255" key="3"/>
<evidence type="ECO:0000269" key="4">
    <source>
    </source>
</evidence>
<evidence type="ECO:0000305" key="5"/>
<sequence>MGEEKSLLQFRSFPSLKTSDFALTEEPSWRLENNVSSNRRRGNKRSGGVFTNFASLSVAIRRDRRESTFNGRNGGGGGAFASVSVVIPKEEDEFAPTSAQLLKNPIALLSIVPKDAALFFAGAFAGAAAKSVTAPLDRIKLLMQTHGVRAGQQSAKKAIGFIEAITLIGKEEGIKGYWKGNLPQVIRIVPYSAVQLFAYETYKKLFRGKDGQLSVLGRLGAGACAGMTSTLITYPLDVLRLRLAVEPGYRTMSQVALNMLREEGVASFYNGLGPSLLSIAPYIAINFCVFDLVKKSLPEKYQQKTQSSLLTAVVAAAIATGTCYPLDTIRRQMQLKGTPYKSVLDAFSGIIAREGVVGLYRGFVPNALKSMPNSSIKLTTFDIVKKLIAASEKEIQRIADDNRKKASPNTIDEQT</sequence>
<reference key="1">
    <citation type="journal article" date="2000" name="Nature">
        <title>Sequence and analysis of chromosome 5 of the plant Arabidopsis thaliana.</title>
        <authorList>
            <person name="Tabata S."/>
            <person name="Kaneko T."/>
            <person name="Nakamura Y."/>
            <person name="Kotani H."/>
            <person name="Kato T."/>
            <person name="Asamizu E."/>
            <person name="Miyajima N."/>
            <person name="Sasamoto S."/>
            <person name="Kimura T."/>
            <person name="Hosouchi T."/>
            <person name="Kawashima K."/>
            <person name="Kohara M."/>
            <person name="Matsumoto M."/>
            <person name="Matsuno A."/>
            <person name="Muraki A."/>
            <person name="Nakayama S."/>
            <person name="Nakazaki N."/>
            <person name="Naruo K."/>
            <person name="Okumura S."/>
            <person name="Shinpo S."/>
            <person name="Takeuchi C."/>
            <person name="Wada T."/>
            <person name="Watanabe A."/>
            <person name="Yamada M."/>
            <person name="Yasuda M."/>
            <person name="Sato S."/>
            <person name="de la Bastide M."/>
            <person name="Huang E."/>
            <person name="Spiegel L."/>
            <person name="Gnoj L."/>
            <person name="O'Shaughnessy A."/>
            <person name="Preston R."/>
            <person name="Habermann K."/>
            <person name="Murray J."/>
            <person name="Johnson D."/>
            <person name="Rohlfing T."/>
            <person name="Nelson J."/>
            <person name="Stoneking T."/>
            <person name="Pepin K."/>
            <person name="Spieth J."/>
            <person name="Sekhon M."/>
            <person name="Armstrong J."/>
            <person name="Becker M."/>
            <person name="Belter E."/>
            <person name="Cordum H."/>
            <person name="Cordes M."/>
            <person name="Courtney L."/>
            <person name="Courtney W."/>
            <person name="Dante M."/>
            <person name="Du H."/>
            <person name="Edwards J."/>
            <person name="Fryman J."/>
            <person name="Haakensen B."/>
            <person name="Lamar E."/>
            <person name="Latreille P."/>
            <person name="Leonard S."/>
            <person name="Meyer R."/>
            <person name="Mulvaney E."/>
            <person name="Ozersky P."/>
            <person name="Riley A."/>
            <person name="Strowmatt C."/>
            <person name="Wagner-McPherson C."/>
            <person name="Wollam A."/>
            <person name="Yoakum M."/>
            <person name="Bell M."/>
            <person name="Dedhia N."/>
            <person name="Parnell L."/>
            <person name="Shah R."/>
            <person name="Rodriguez M."/>
            <person name="Hoon See L."/>
            <person name="Vil D."/>
            <person name="Baker J."/>
            <person name="Kirchoff K."/>
            <person name="Toth K."/>
            <person name="King L."/>
            <person name="Bahret A."/>
            <person name="Miller B."/>
            <person name="Marra M.A."/>
            <person name="Martienssen R."/>
            <person name="McCombie W.R."/>
            <person name="Wilson R.K."/>
            <person name="Murphy G."/>
            <person name="Bancroft I."/>
            <person name="Volckaert G."/>
            <person name="Wambutt R."/>
            <person name="Duesterhoeft A."/>
            <person name="Stiekema W."/>
            <person name="Pohl T."/>
            <person name="Entian K.-D."/>
            <person name="Terryn N."/>
            <person name="Hartley N."/>
            <person name="Bent E."/>
            <person name="Johnson S."/>
            <person name="Langham S.-A."/>
            <person name="McCullagh B."/>
            <person name="Robben J."/>
            <person name="Grymonprez B."/>
            <person name="Zimmermann W."/>
            <person name="Ramsperger U."/>
            <person name="Wedler H."/>
            <person name="Balke K."/>
            <person name="Wedler E."/>
            <person name="Peters S."/>
            <person name="van Staveren M."/>
            <person name="Dirkse W."/>
            <person name="Mooijman P."/>
            <person name="Klein Lankhorst R."/>
            <person name="Weitzenegger T."/>
            <person name="Bothe G."/>
            <person name="Rose M."/>
            <person name="Hauf J."/>
            <person name="Berneiser S."/>
            <person name="Hempel S."/>
            <person name="Feldpausch M."/>
            <person name="Lamberth S."/>
            <person name="Villarroel R."/>
            <person name="Gielen J."/>
            <person name="Ardiles W."/>
            <person name="Bents O."/>
            <person name="Lemcke K."/>
            <person name="Kolesov G."/>
            <person name="Mayer K.F.X."/>
            <person name="Rudd S."/>
            <person name="Schoof H."/>
            <person name="Schueller C."/>
            <person name="Zaccaria P."/>
            <person name="Mewes H.-W."/>
            <person name="Bevan M."/>
            <person name="Fransz P.F."/>
        </authorList>
    </citation>
    <scope>NUCLEOTIDE SEQUENCE [LARGE SCALE GENOMIC DNA]</scope>
    <source>
        <strain>cv. Columbia</strain>
    </source>
</reference>
<reference key="2">
    <citation type="journal article" date="2017" name="Plant J.">
        <title>Araport11: a complete reannotation of the Arabidopsis thaliana reference genome.</title>
        <authorList>
            <person name="Cheng C.Y."/>
            <person name="Krishnakumar V."/>
            <person name="Chan A.P."/>
            <person name="Thibaud-Nissen F."/>
            <person name="Schobel S."/>
            <person name="Town C.D."/>
        </authorList>
    </citation>
    <scope>GENOME REANNOTATION</scope>
    <source>
        <strain>cv. Columbia</strain>
    </source>
</reference>
<reference key="3">
    <citation type="journal article" date="2003" name="Science">
        <title>Empirical analysis of transcriptional activity in the Arabidopsis genome.</title>
        <authorList>
            <person name="Yamada K."/>
            <person name="Lim J."/>
            <person name="Dale J.M."/>
            <person name="Chen H."/>
            <person name="Shinn P."/>
            <person name="Palm C.J."/>
            <person name="Southwick A.M."/>
            <person name="Wu H.C."/>
            <person name="Kim C.J."/>
            <person name="Nguyen M."/>
            <person name="Pham P.K."/>
            <person name="Cheuk R.F."/>
            <person name="Karlin-Newmann G."/>
            <person name="Liu S.X."/>
            <person name="Lam B."/>
            <person name="Sakano H."/>
            <person name="Wu T."/>
            <person name="Yu G."/>
            <person name="Miranda M."/>
            <person name="Quach H.L."/>
            <person name="Tripp M."/>
            <person name="Chang C.H."/>
            <person name="Lee J.M."/>
            <person name="Toriumi M.J."/>
            <person name="Chan M.M."/>
            <person name="Tang C.C."/>
            <person name="Onodera C.S."/>
            <person name="Deng J.M."/>
            <person name="Akiyama K."/>
            <person name="Ansari Y."/>
            <person name="Arakawa T."/>
            <person name="Banh J."/>
            <person name="Banno F."/>
            <person name="Bowser L."/>
            <person name="Brooks S.Y."/>
            <person name="Carninci P."/>
            <person name="Chao Q."/>
            <person name="Choy N."/>
            <person name="Enju A."/>
            <person name="Goldsmith A.D."/>
            <person name="Gurjal M."/>
            <person name="Hansen N.F."/>
            <person name="Hayashizaki Y."/>
            <person name="Johnson-Hopson C."/>
            <person name="Hsuan V.W."/>
            <person name="Iida K."/>
            <person name="Karnes M."/>
            <person name="Khan S."/>
            <person name="Koesema E."/>
            <person name="Ishida J."/>
            <person name="Jiang P.X."/>
            <person name="Jones T."/>
            <person name="Kawai J."/>
            <person name="Kamiya A."/>
            <person name="Meyers C."/>
            <person name="Nakajima M."/>
            <person name="Narusaka M."/>
            <person name="Seki M."/>
            <person name="Sakurai T."/>
            <person name="Satou M."/>
            <person name="Tamse R."/>
            <person name="Vaysberg M."/>
            <person name="Wallender E.K."/>
            <person name="Wong C."/>
            <person name="Yamamura Y."/>
            <person name="Yuan S."/>
            <person name="Shinozaki K."/>
            <person name="Davis R.W."/>
            <person name="Theologis A."/>
            <person name="Ecker J.R."/>
        </authorList>
    </citation>
    <scope>NUCLEOTIDE SEQUENCE [LARGE SCALE MRNA]</scope>
    <source>
        <strain>cv. Columbia</strain>
    </source>
</reference>
<reference key="4">
    <citation type="submission" date="2002-03" db="EMBL/GenBank/DDBJ databases">
        <title>Full-length cDNA from Arabidopsis thaliana.</title>
        <authorList>
            <person name="Brover V.V."/>
            <person name="Troukhan M.E."/>
            <person name="Alexandrov N.A."/>
            <person name="Lu Y.-P."/>
            <person name="Flavell R.B."/>
            <person name="Feldmann K.A."/>
        </authorList>
    </citation>
    <scope>NUCLEOTIDE SEQUENCE [LARGE SCALE MRNA]</scope>
</reference>
<reference key="5">
    <citation type="journal article" date="2004" name="Trends Plant Sci.">
        <title>The growing family of mitochondrial carriers in Arabidopsis.</title>
        <authorList>
            <person name="Picault N."/>
            <person name="Hodges M."/>
            <person name="Palmieri L."/>
            <person name="Palmieri F."/>
        </authorList>
    </citation>
    <scope>GENE FAMILY</scope>
</reference>
<reference key="6">
    <citation type="journal article" date="2007" name="J. Biol. Chem.">
        <title>Identification, expression, and functional analyses of a thylakoid ATP/ADP carrier from Arabidopsis.</title>
        <authorList>
            <person name="Thuswaldner S."/>
            <person name="Lagerstedt J.O."/>
            <person name="Rojas-Stuetz M."/>
            <person name="Bouhidel K."/>
            <person name="Der C."/>
            <person name="Leborgne-Castel N."/>
            <person name="Mishra A."/>
            <person name="Marty F."/>
            <person name="Schoefs B."/>
            <person name="Adamska I."/>
            <person name="Persson B.L."/>
            <person name="Spetea C."/>
        </authorList>
    </citation>
    <scope>IDENTIFICATION</scope>
    <scope>FUNCTION</scope>
    <scope>DISRUPTION PHENOTYPE</scope>
    <scope>DEVELOPMENTAL STAGE</scope>
    <scope>TISSUE SPECIFICITY</scope>
    <scope>SUBCELLULAR LOCATION</scope>
    <scope>ACTIVITY REGULATION</scope>
    <scope>BIOPHYSICOCHEMICAL PROPERTIES</scope>
</reference>
<accession>Q9M024</accession>
<accession>Q8LCT8</accession>
<proteinExistence type="evidence at protein level"/>
<dbReference type="EMBL" id="AL161946">
    <property type="protein sequence ID" value="CAB82266.1"/>
    <property type="molecule type" value="Genomic_DNA"/>
</dbReference>
<dbReference type="EMBL" id="CP002688">
    <property type="protein sequence ID" value="AED90353.1"/>
    <property type="molecule type" value="Genomic_DNA"/>
</dbReference>
<dbReference type="EMBL" id="AY074566">
    <property type="protein sequence ID" value="AAL67106.1"/>
    <property type="molecule type" value="mRNA"/>
</dbReference>
<dbReference type="EMBL" id="BT006336">
    <property type="protein sequence ID" value="AAP21144.1"/>
    <property type="molecule type" value="mRNA"/>
</dbReference>
<dbReference type="EMBL" id="AY086408">
    <property type="protein sequence ID" value="AAM64475.1"/>
    <property type="molecule type" value="mRNA"/>
</dbReference>
<dbReference type="PIR" id="T48171">
    <property type="entry name" value="T48171"/>
</dbReference>
<dbReference type="RefSeq" id="NP_195770.1">
    <property type="nucleotide sequence ID" value="NM_120228.4"/>
</dbReference>
<dbReference type="SMR" id="Q9M024"/>
<dbReference type="FunCoup" id="Q9M024">
    <property type="interactions" value="37"/>
</dbReference>
<dbReference type="STRING" id="3702.Q9M024"/>
<dbReference type="TCDB" id="2.A.29.23.3">
    <property type="family name" value="the mitochondrial carrier (mc) family"/>
</dbReference>
<dbReference type="PaxDb" id="3702-AT5G01500.1"/>
<dbReference type="ProteomicsDB" id="245278"/>
<dbReference type="EnsemblPlants" id="AT5G01500.1">
    <property type="protein sequence ID" value="AT5G01500.1"/>
    <property type="gene ID" value="AT5G01500"/>
</dbReference>
<dbReference type="GeneID" id="831861"/>
<dbReference type="Gramene" id="AT5G01500.1">
    <property type="protein sequence ID" value="AT5G01500.1"/>
    <property type="gene ID" value="AT5G01500"/>
</dbReference>
<dbReference type="KEGG" id="ath:AT5G01500"/>
<dbReference type="Araport" id="AT5G01500"/>
<dbReference type="TAIR" id="AT5G01500">
    <property type="gene designation" value="TAAC"/>
</dbReference>
<dbReference type="eggNOG" id="KOG0752">
    <property type="taxonomic scope" value="Eukaryota"/>
</dbReference>
<dbReference type="HOGENOM" id="CLU_015166_10_5_1"/>
<dbReference type="InParanoid" id="Q9M024"/>
<dbReference type="OMA" id="QSFMCVG"/>
<dbReference type="PhylomeDB" id="Q9M024"/>
<dbReference type="SABIO-RK" id="Q9M024"/>
<dbReference type="PRO" id="PR:Q9M024"/>
<dbReference type="Proteomes" id="UP000006548">
    <property type="component" value="Chromosome 5"/>
</dbReference>
<dbReference type="ExpressionAtlas" id="Q9M024">
    <property type="expression patterns" value="baseline and differential"/>
</dbReference>
<dbReference type="GO" id="GO:0009507">
    <property type="term" value="C:chloroplast"/>
    <property type="evidence" value="ECO:0007005"/>
    <property type="project" value="TAIR"/>
</dbReference>
<dbReference type="GO" id="GO:0009941">
    <property type="term" value="C:chloroplast envelope"/>
    <property type="evidence" value="ECO:0007005"/>
    <property type="project" value="TAIR"/>
</dbReference>
<dbReference type="GO" id="GO:0009535">
    <property type="term" value="C:chloroplast thylakoid membrane"/>
    <property type="evidence" value="ECO:0007669"/>
    <property type="project" value="UniProtKB-SubCell"/>
</dbReference>
<dbReference type="GO" id="GO:0005886">
    <property type="term" value="C:plasma membrane"/>
    <property type="evidence" value="ECO:0007005"/>
    <property type="project" value="TAIR"/>
</dbReference>
<dbReference type="GO" id="GO:0009536">
    <property type="term" value="C:plastid"/>
    <property type="evidence" value="ECO:0007005"/>
    <property type="project" value="TAIR"/>
</dbReference>
<dbReference type="GO" id="GO:0009526">
    <property type="term" value="C:plastid envelope"/>
    <property type="evidence" value="ECO:0000314"/>
    <property type="project" value="TAIR"/>
</dbReference>
<dbReference type="GO" id="GO:0042651">
    <property type="term" value="C:thylakoid membrane"/>
    <property type="evidence" value="ECO:0000314"/>
    <property type="project" value="TAIR"/>
</dbReference>
<dbReference type="GO" id="GO:0005347">
    <property type="term" value="F:ATP transmembrane transporter activity"/>
    <property type="evidence" value="ECO:0000314"/>
    <property type="project" value="TAIR"/>
</dbReference>
<dbReference type="GO" id="GO:0010117">
    <property type="term" value="P:photoprotection"/>
    <property type="evidence" value="ECO:0000315"/>
    <property type="project" value="TAIR"/>
</dbReference>
<dbReference type="GO" id="GO:0010206">
    <property type="term" value="P:photosystem II repair"/>
    <property type="evidence" value="ECO:0000315"/>
    <property type="project" value="TAIR"/>
</dbReference>
<dbReference type="FunFam" id="1.50.40.10:FF:000042">
    <property type="entry name" value="Envelope ADP,ATP carrier protein"/>
    <property type="match status" value="1"/>
</dbReference>
<dbReference type="Gene3D" id="1.50.40.10">
    <property type="entry name" value="Mitochondrial carrier domain"/>
    <property type="match status" value="1"/>
</dbReference>
<dbReference type="InterPro" id="IPR002067">
    <property type="entry name" value="Mit_carrier"/>
</dbReference>
<dbReference type="InterPro" id="IPR018108">
    <property type="entry name" value="Mitochondrial_sb/sol_carrier"/>
</dbReference>
<dbReference type="InterPro" id="IPR023395">
    <property type="entry name" value="Mt_carrier_dom_sf"/>
</dbReference>
<dbReference type="PANTHER" id="PTHR24089">
    <property type="entry name" value="SOLUTE CARRIER FAMILY 25"/>
    <property type="match status" value="1"/>
</dbReference>
<dbReference type="Pfam" id="PF00153">
    <property type="entry name" value="Mito_carr"/>
    <property type="match status" value="3"/>
</dbReference>
<dbReference type="PRINTS" id="PR00926">
    <property type="entry name" value="MITOCARRIER"/>
</dbReference>
<dbReference type="SUPFAM" id="SSF103506">
    <property type="entry name" value="Mitochondrial carrier"/>
    <property type="match status" value="1"/>
</dbReference>
<dbReference type="PROSITE" id="PS50920">
    <property type="entry name" value="SOLCAR"/>
    <property type="match status" value="3"/>
</dbReference>
<keyword id="KW-0150">Chloroplast</keyword>
<keyword id="KW-0472">Membrane</keyword>
<keyword id="KW-0934">Plastid</keyword>
<keyword id="KW-1185">Reference proteome</keyword>
<keyword id="KW-0677">Repeat</keyword>
<keyword id="KW-0793">Thylakoid</keyword>
<keyword id="KW-0809">Transit peptide</keyword>
<keyword id="KW-0812">Transmembrane</keyword>
<keyword id="KW-1133">Transmembrane helix</keyword>
<keyword id="KW-0813">Transport</keyword>
<comment type="function">
    <text evidence="4">Specifically transports adenine nucleotides. Involved in the uptake of ATP into thylakoids in exchange for lumenal ADP.</text>
</comment>
<comment type="activity regulation">
    <text evidence="4">KM and Vmax values toward ATP only are increased by m-chlorocarbonyl cyanide phenylhydrazone (CCCP). The corresponding values for ADP are not affected.</text>
</comment>
<comment type="biophysicochemical properties">
    <kinetics>
        <KM evidence="4">47 uM for ATP (for the recombinant protein)</KM>
        <KM evidence="4">0.5 uM for ATP (in vivo)</KM>
        <KM evidence="4">45 uM for ADP (for the recombinant protein)</KM>
        <Vmax evidence="4">0.71 nmol/h/mg enzyme toward ATP (for the recombinant protein)</Vmax>
        <Vmax evidence="4">0.53 nmol/h/mg enzyme toward ADP (for the recombinant protein)</Vmax>
    </kinetics>
</comment>
<comment type="subcellular location">
    <subcellularLocation>
        <location evidence="4">Plastid</location>
        <location evidence="4">Chloroplast thylakoid membrane</location>
        <topology evidence="4">Multi-pass membrane protein</topology>
    </subcellularLocation>
    <subcellularLocation>
        <location evidence="4">Plastid</location>
        <location evidence="4">Chloroplast envelope</location>
    </subcellularLocation>
    <text>Detected only in low amounts in the chloroplast envelope and in non-photosynthetic plastids.</text>
</comment>
<comment type="tissue specificity">
    <text evidence="4">Highly expressed in developing photosynthetic organs such as leaves, flower buds and green siliques. Also detected in roots, flowers, mature leaves and stems.</text>
</comment>
<comment type="developmental stage">
    <text evidence="4">Expressed in dark-grown seedlings and remains stable throughout the greening process. Highest expression in developing green tissues and in leaves undergoing senescence or abiotic stress, with the exception of heat shock conditions that induced a drastic reduction of expression.</text>
</comment>
<comment type="disruption phenotype">
    <text evidence="4">Plants show a 30-40% reduction in the thylakoid ATP transport and metabolism.</text>
</comment>
<comment type="similarity">
    <text evidence="5">Belongs to the mitochondrial carrier (TC 2.A.29) family.</text>
</comment>
<gene>
    <name type="primary">TAAC</name>
    <name type="ordered locus">At5g01500</name>
    <name type="ORF">F7A7.20</name>
</gene>
<name>TAAC_ARATH</name>
<organism>
    <name type="scientific">Arabidopsis thaliana</name>
    <name type="common">Mouse-ear cress</name>
    <dbReference type="NCBI Taxonomy" id="3702"/>
    <lineage>
        <taxon>Eukaryota</taxon>
        <taxon>Viridiplantae</taxon>
        <taxon>Streptophyta</taxon>
        <taxon>Embryophyta</taxon>
        <taxon>Tracheophyta</taxon>
        <taxon>Spermatophyta</taxon>
        <taxon>Magnoliopsida</taxon>
        <taxon>eudicotyledons</taxon>
        <taxon>Gunneridae</taxon>
        <taxon>Pentapetalae</taxon>
        <taxon>rosids</taxon>
        <taxon>malvids</taxon>
        <taxon>Brassicales</taxon>
        <taxon>Brassicaceae</taxon>
        <taxon>Camelineae</taxon>
        <taxon>Arabidopsis</taxon>
    </lineage>
</organism>